<evidence type="ECO:0000255" key="1">
    <source>
        <dbReference type="HAMAP-Rule" id="MF_00016"/>
    </source>
</evidence>
<evidence type="ECO:0000256" key="2">
    <source>
        <dbReference type="SAM" id="MobiDB-lite"/>
    </source>
</evidence>
<gene>
    <name evidence="1" type="primary">ruvB</name>
    <name type="ordered locus">SynRCC307_0124</name>
</gene>
<accession>A5GQ68</accession>
<dbReference type="EC" id="3.6.4.-" evidence="1"/>
<dbReference type="EMBL" id="CT978603">
    <property type="protein sequence ID" value="CAK27027.1"/>
    <property type="molecule type" value="Genomic_DNA"/>
</dbReference>
<dbReference type="SMR" id="A5GQ68"/>
<dbReference type="STRING" id="316278.SynRCC307_0124"/>
<dbReference type="KEGG" id="syr:SynRCC307_0124"/>
<dbReference type="eggNOG" id="COG2255">
    <property type="taxonomic scope" value="Bacteria"/>
</dbReference>
<dbReference type="HOGENOM" id="CLU_055599_1_0_3"/>
<dbReference type="OrthoDB" id="9804478at2"/>
<dbReference type="Proteomes" id="UP000001115">
    <property type="component" value="Chromosome"/>
</dbReference>
<dbReference type="GO" id="GO:0005737">
    <property type="term" value="C:cytoplasm"/>
    <property type="evidence" value="ECO:0007669"/>
    <property type="project" value="UniProtKB-SubCell"/>
</dbReference>
<dbReference type="GO" id="GO:0048476">
    <property type="term" value="C:Holliday junction resolvase complex"/>
    <property type="evidence" value="ECO:0007669"/>
    <property type="project" value="UniProtKB-UniRule"/>
</dbReference>
<dbReference type="GO" id="GO:0005524">
    <property type="term" value="F:ATP binding"/>
    <property type="evidence" value="ECO:0007669"/>
    <property type="project" value="UniProtKB-UniRule"/>
</dbReference>
<dbReference type="GO" id="GO:0016887">
    <property type="term" value="F:ATP hydrolysis activity"/>
    <property type="evidence" value="ECO:0007669"/>
    <property type="project" value="InterPro"/>
</dbReference>
<dbReference type="GO" id="GO:0000400">
    <property type="term" value="F:four-way junction DNA binding"/>
    <property type="evidence" value="ECO:0007669"/>
    <property type="project" value="UniProtKB-UniRule"/>
</dbReference>
<dbReference type="GO" id="GO:0009378">
    <property type="term" value="F:four-way junction helicase activity"/>
    <property type="evidence" value="ECO:0007669"/>
    <property type="project" value="InterPro"/>
</dbReference>
<dbReference type="GO" id="GO:0006310">
    <property type="term" value="P:DNA recombination"/>
    <property type="evidence" value="ECO:0007669"/>
    <property type="project" value="UniProtKB-UniRule"/>
</dbReference>
<dbReference type="GO" id="GO:0006281">
    <property type="term" value="P:DNA repair"/>
    <property type="evidence" value="ECO:0007669"/>
    <property type="project" value="UniProtKB-UniRule"/>
</dbReference>
<dbReference type="CDD" id="cd00009">
    <property type="entry name" value="AAA"/>
    <property type="match status" value="1"/>
</dbReference>
<dbReference type="Gene3D" id="1.10.8.60">
    <property type="match status" value="1"/>
</dbReference>
<dbReference type="Gene3D" id="3.40.50.300">
    <property type="entry name" value="P-loop containing nucleotide triphosphate hydrolases"/>
    <property type="match status" value="1"/>
</dbReference>
<dbReference type="Gene3D" id="1.10.10.10">
    <property type="entry name" value="Winged helix-like DNA-binding domain superfamily/Winged helix DNA-binding domain"/>
    <property type="match status" value="1"/>
</dbReference>
<dbReference type="HAMAP" id="MF_00016">
    <property type="entry name" value="DNA_HJ_migration_RuvB"/>
    <property type="match status" value="1"/>
</dbReference>
<dbReference type="InterPro" id="IPR003593">
    <property type="entry name" value="AAA+_ATPase"/>
</dbReference>
<dbReference type="InterPro" id="IPR041445">
    <property type="entry name" value="AAA_lid_4"/>
</dbReference>
<dbReference type="InterPro" id="IPR004605">
    <property type="entry name" value="DNA_helicase_Holl-junc_RuvB"/>
</dbReference>
<dbReference type="InterPro" id="IPR027417">
    <property type="entry name" value="P-loop_NTPase"/>
</dbReference>
<dbReference type="InterPro" id="IPR008824">
    <property type="entry name" value="RuvB-like_N"/>
</dbReference>
<dbReference type="InterPro" id="IPR008823">
    <property type="entry name" value="RuvB_C"/>
</dbReference>
<dbReference type="InterPro" id="IPR036388">
    <property type="entry name" value="WH-like_DNA-bd_sf"/>
</dbReference>
<dbReference type="InterPro" id="IPR036390">
    <property type="entry name" value="WH_DNA-bd_sf"/>
</dbReference>
<dbReference type="NCBIfam" id="NF000868">
    <property type="entry name" value="PRK00080.1"/>
    <property type="match status" value="1"/>
</dbReference>
<dbReference type="NCBIfam" id="TIGR00635">
    <property type="entry name" value="ruvB"/>
    <property type="match status" value="1"/>
</dbReference>
<dbReference type="PANTHER" id="PTHR42848">
    <property type="match status" value="1"/>
</dbReference>
<dbReference type="PANTHER" id="PTHR42848:SF1">
    <property type="entry name" value="HOLLIDAY JUNCTION BRANCH MIGRATION COMPLEX SUBUNIT RUVB"/>
    <property type="match status" value="1"/>
</dbReference>
<dbReference type="Pfam" id="PF17864">
    <property type="entry name" value="AAA_lid_4"/>
    <property type="match status" value="1"/>
</dbReference>
<dbReference type="Pfam" id="PF05491">
    <property type="entry name" value="RuvB_C"/>
    <property type="match status" value="1"/>
</dbReference>
<dbReference type="Pfam" id="PF05496">
    <property type="entry name" value="RuvB_N"/>
    <property type="match status" value="1"/>
</dbReference>
<dbReference type="SMART" id="SM00382">
    <property type="entry name" value="AAA"/>
    <property type="match status" value="1"/>
</dbReference>
<dbReference type="SUPFAM" id="SSF52540">
    <property type="entry name" value="P-loop containing nucleoside triphosphate hydrolases"/>
    <property type="match status" value="1"/>
</dbReference>
<dbReference type="SUPFAM" id="SSF46785">
    <property type="entry name" value="Winged helix' DNA-binding domain"/>
    <property type="match status" value="1"/>
</dbReference>
<feature type="chain" id="PRO_1000001492" description="Holliday junction branch migration complex subunit RuvB">
    <location>
        <begin position="1"/>
        <end position="344"/>
    </location>
</feature>
<feature type="region of interest" description="Disordered" evidence="2">
    <location>
        <begin position="1"/>
        <end position="37"/>
    </location>
</feature>
<feature type="region of interest" description="Large ATPase domain (RuvB-L)" evidence="1">
    <location>
        <begin position="13"/>
        <end position="197"/>
    </location>
</feature>
<feature type="region of interest" description="Small ATPAse domain (RuvB-S)" evidence="1">
    <location>
        <begin position="198"/>
        <end position="268"/>
    </location>
</feature>
<feature type="region of interest" description="Head domain (RuvB-H)" evidence="1">
    <location>
        <begin position="271"/>
        <end position="344"/>
    </location>
</feature>
<feature type="compositionally biased region" description="Low complexity" evidence="2">
    <location>
        <begin position="1"/>
        <end position="10"/>
    </location>
</feature>
<feature type="binding site" evidence="1">
    <location>
        <position position="36"/>
    </location>
    <ligand>
        <name>ATP</name>
        <dbReference type="ChEBI" id="CHEBI:30616"/>
    </ligand>
</feature>
<feature type="binding site" evidence="1">
    <location>
        <position position="37"/>
    </location>
    <ligand>
        <name>ATP</name>
        <dbReference type="ChEBI" id="CHEBI:30616"/>
    </ligand>
</feature>
<feature type="binding site" evidence="1">
    <location>
        <position position="78"/>
    </location>
    <ligand>
        <name>ATP</name>
        <dbReference type="ChEBI" id="CHEBI:30616"/>
    </ligand>
</feature>
<feature type="binding site" evidence="1">
    <location>
        <position position="81"/>
    </location>
    <ligand>
        <name>ATP</name>
        <dbReference type="ChEBI" id="CHEBI:30616"/>
    </ligand>
</feature>
<feature type="binding site" evidence="1">
    <location>
        <position position="82"/>
    </location>
    <ligand>
        <name>ATP</name>
        <dbReference type="ChEBI" id="CHEBI:30616"/>
    </ligand>
</feature>
<feature type="binding site" evidence="1">
    <location>
        <position position="82"/>
    </location>
    <ligand>
        <name>Mg(2+)</name>
        <dbReference type="ChEBI" id="CHEBI:18420"/>
    </ligand>
</feature>
<feature type="binding site" evidence="1">
    <location>
        <position position="83"/>
    </location>
    <ligand>
        <name>ATP</name>
        <dbReference type="ChEBI" id="CHEBI:30616"/>
    </ligand>
</feature>
<feature type="binding site" evidence="1">
    <location>
        <begin position="144"/>
        <end position="146"/>
    </location>
    <ligand>
        <name>ATP</name>
        <dbReference type="ChEBI" id="CHEBI:30616"/>
    </ligand>
</feature>
<feature type="binding site" evidence="1">
    <location>
        <position position="187"/>
    </location>
    <ligand>
        <name>ATP</name>
        <dbReference type="ChEBI" id="CHEBI:30616"/>
    </ligand>
</feature>
<feature type="binding site" evidence="1">
    <location>
        <position position="197"/>
    </location>
    <ligand>
        <name>ATP</name>
        <dbReference type="ChEBI" id="CHEBI:30616"/>
    </ligand>
</feature>
<feature type="binding site" evidence="1">
    <location>
        <position position="234"/>
    </location>
    <ligand>
        <name>ATP</name>
        <dbReference type="ChEBI" id="CHEBI:30616"/>
    </ligand>
</feature>
<feature type="binding site" evidence="1">
    <location>
        <position position="326"/>
    </location>
    <ligand>
        <name>DNA</name>
        <dbReference type="ChEBI" id="CHEBI:16991"/>
    </ligand>
</feature>
<feature type="binding site" evidence="1">
    <location>
        <position position="331"/>
    </location>
    <ligand>
        <name>DNA</name>
        <dbReference type="ChEBI" id="CHEBI:16991"/>
    </ligand>
</feature>
<keyword id="KW-0067">ATP-binding</keyword>
<keyword id="KW-0963">Cytoplasm</keyword>
<keyword id="KW-0227">DNA damage</keyword>
<keyword id="KW-0233">DNA recombination</keyword>
<keyword id="KW-0234">DNA repair</keyword>
<keyword id="KW-0238">DNA-binding</keyword>
<keyword id="KW-0378">Hydrolase</keyword>
<keyword id="KW-0547">Nucleotide-binding</keyword>
<keyword id="KW-1185">Reference proteome</keyword>
<organism>
    <name type="scientific">Synechococcus sp. (strain RCC307)</name>
    <dbReference type="NCBI Taxonomy" id="316278"/>
    <lineage>
        <taxon>Bacteria</taxon>
        <taxon>Bacillati</taxon>
        <taxon>Cyanobacteriota</taxon>
        <taxon>Cyanophyceae</taxon>
        <taxon>Synechococcales</taxon>
        <taxon>Synechococcaceae</taxon>
        <taxon>Synechococcus</taxon>
    </lineage>
</organism>
<comment type="function">
    <text evidence="1">The RuvA-RuvB-RuvC complex processes Holliday junction (HJ) DNA during genetic recombination and DNA repair, while the RuvA-RuvB complex plays an important role in the rescue of blocked DNA replication forks via replication fork reversal (RFR). RuvA specifically binds to HJ cruciform DNA, conferring on it an open structure. The RuvB hexamer acts as an ATP-dependent pump, pulling dsDNA into and through the RuvAB complex. RuvB forms 2 homohexamers on either side of HJ DNA bound by 1 or 2 RuvA tetramers; 4 subunits per hexamer contact DNA at a time. Coordinated motions by a converter formed by DNA-disengaged RuvB subunits stimulates ATP hydrolysis and nucleotide exchange. Immobilization of the converter enables RuvB to convert the ATP-contained energy into a lever motion, pulling 2 nucleotides of DNA out of the RuvA tetramer per ATP hydrolyzed, thus driving DNA branch migration. The RuvB motors rotate together with the DNA substrate, which together with the progressing nucleotide cycle form the mechanistic basis for DNA recombination by continuous HJ branch migration. Branch migration allows RuvC to scan DNA until it finds its consensus sequence, where it cleaves and resolves cruciform DNA.</text>
</comment>
<comment type="catalytic activity">
    <reaction evidence="1">
        <text>ATP + H2O = ADP + phosphate + H(+)</text>
        <dbReference type="Rhea" id="RHEA:13065"/>
        <dbReference type="ChEBI" id="CHEBI:15377"/>
        <dbReference type="ChEBI" id="CHEBI:15378"/>
        <dbReference type="ChEBI" id="CHEBI:30616"/>
        <dbReference type="ChEBI" id="CHEBI:43474"/>
        <dbReference type="ChEBI" id="CHEBI:456216"/>
    </reaction>
</comment>
<comment type="subunit">
    <text evidence="1">Homohexamer. Forms an RuvA(8)-RuvB(12)-Holliday junction (HJ) complex. HJ DNA is sandwiched between 2 RuvA tetramers; dsDNA enters through RuvA and exits via RuvB. An RuvB hexamer assembles on each DNA strand where it exits the tetramer. Each RuvB hexamer is contacted by two RuvA subunits (via domain III) on 2 adjacent RuvB subunits; this complex drives branch migration. In the full resolvosome a probable DNA-RuvA(4)-RuvB(12)-RuvC(2) complex forms which resolves the HJ.</text>
</comment>
<comment type="subcellular location">
    <subcellularLocation>
        <location evidence="1">Cytoplasm</location>
    </subcellularLocation>
</comment>
<comment type="domain">
    <text evidence="1">Has 3 domains, the large (RuvB-L) and small ATPase (RuvB-S) domains and the C-terminal head (RuvB-H) domain. The head domain binds DNA, while the ATPase domains jointly bind ATP, ADP or are empty depending on the state of the subunit in the translocation cycle. During a single DNA translocation step the structure of each domain remains the same, but their relative positions change.</text>
</comment>
<comment type="similarity">
    <text evidence="1">Belongs to the RuvB family.</text>
</comment>
<reference key="1">
    <citation type="submission" date="2006-05" db="EMBL/GenBank/DDBJ databases">
        <authorList>
            <consortium name="Genoscope"/>
        </authorList>
    </citation>
    <scope>NUCLEOTIDE SEQUENCE [LARGE SCALE GENOMIC DNA]</scope>
    <source>
        <strain>RCC307</strain>
    </source>
</reference>
<protein>
    <recommendedName>
        <fullName evidence="1">Holliday junction branch migration complex subunit RuvB</fullName>
        <ecNumber evidence="1">3.6.4.-</ecNumber>
    </recommendedName>
</protein>
<proteinExistence type="inferred from homology"/>
<name>RUVB_SYNR3</name>
<sequence>MAIQSSSSGSKPPAPKRLVAPEATAAEGDGGRDEGLRPRRLADYIGQSELKQVLGIAVEATRLRNDALDHVLLYGPPGLGKTTMALVLAEELGVSCRIASAPALERPRDIVGLLMNLQPRELLFIDEIHRLNRVAEELLYPAMEDFRLDLTVGAGPAARTRSLELPPFTLVGATTKAGSLSSPLRDRFGLIQRLEFYSCSDLEAIVSRSAQLLQLELAAEAAAEIARRCRGTPRIANRLLRRVRDFASVRGIAAVGAPVVVEALAMHRVDGRGLDPSDRRLLSLLETSYGGGPAGLDTLAAALGEDPDTLEAVVEPFLLQLGFLQRTPRGRVLTDAGRAHLEAA</sequence>